<dbReference type="EC" id="2.1.1.228" evidence="1"/>
<dbReference type="EMBL" id="CP000813">
    <property type="protein sequence ID" value="ABV62184.1"/>
    <property type="molecule type" value="Genomic_DNA"/>
</dbReference>
<dbReference type="RefSeq" id="WP_012009939.1">
    <property type="nucleotide sequence ID" value="NZ_VEAS01000002.1"/>
</dbReference>
<dbReference type="SMR" id="A8FD67"/>
<dbReference type="STRING" id="315750.BPUM_1501"/>
<dbReference type="GeneID" id="5620764"/>
<dbReference type="KEGG" id="bpu:BPUM_1501"/>
<dbReference type="eggNOG" id="COG0336">
    <property type="taxonomic scope" value="Bacteria"/>
</dbReference>
<dbReference type="HOGENOM" id="CLU_047363_0_1_9"/>
<dbReference type="OrthoDB" id="9807416at2"/>
<dbReference type="Proteomes" id="UP000001355">
    <property type="component" value="Chromosome"/>
</dbReference>
<dbReference type="GO" id="GO:0005829">
    <property type="term" value="C:cytosol"/>
    <property type="evidence" value="ECO:0007669"/>
    <property type="project" value="TreeGrafter"/>
</dbReference>
<dbReference type="GO" id="GO:0052906">
    <property type="term" value="F:tRNA (guanine(37)-N1)-methyltransferase activity"/>
    <property type="evidence" value="ECO:0007669"/>
    <property type="project" value="UniProtKB-UniRule"/>
</dbReference>
<dbReference type="GO" id="GO:0002939">
    <property type="term" value="P:tRNA N1-guanine methylation"/>
    <property type="evidence" value="ECO:0007669"/>
    <property type="project" value="TreeGrafter"/>
</dbReference>
<dbReference type="CDD" id="cd18080">
    <property type="entry name" value="TrmD-like"/>
    <property type="match status" value="1"/>
</dbReference>
<dbReference type="FunFam" id="1.10.1270.20:FF:000001">
    <property type="entry name" value="tRNA (guanine-N(1)-)-methyltransferase"/>
    <property type="match status" value="1"/>
</dbReference>
<dbReference type="FunFam" id="3.40.1280.10:FF:000001">
    <property type="entry name" value="tRNA (guanine-N(1)-)-methyltransferase"/>
    <property type="match status" value="1"/>
</dbReference>
<dbReference type="Gene3D" id="3.40.1280.10">
    <property type="match status" value="1"/>
</dbReference>
<dbReference type="Gene3D" id="1.10.1270.20">
    <property type="entry name" value="tRNA(m1g37)methyltransferase, domain 2"/>
    <property type="match status" value="1"/>
</dbReference>
<dbReference type="HAMAP" id="MF_00605">
    <property type="entry name" value="TrmD"/>
    <property type="match status" value="1"/>
</dbReference>
<dbReference type="InterPro" id="IPR029028">
    <property type="entry name" value="Alpha/beta_knot_MTases"/>
</dbReference>
<dbReference type="InterPro" id="IPR023148">
    <property type="entry name" value="tRNA_m1G_MeTrfase_C_sf"/>
</dbReference>
<dbReference type="InterPro" id="IPR002649">
    <property type="entry name" value="tRNA_m1G_MeTrfase_TrmD"/>
</dbReference>
<dbReference type="InterPro" id="IPR029026">
    <property type="entry name" value="tRNA_m1G_MTases_N"/>
</dbReference>
<dbReference type="InterPro" id="IPR016009">
    <property type="entry name" value="tRNA_MeTrfase_TRMD/TRM10"/>
</dbReference>
<dbReference type="NCBIfam" id="NF000648">
    <property type="entry name" value="PRK00026.1"/>
    <property type="match status" value="1"/>
</dbReference>
<dbReference type="NCBIfam" id="TIGR00088">
    <property type="entry name" value="trmD"/>
    <property type="match status" value="1"/>
</dbReference>
<dbReference type="PANTHER" id="PTHR46417">
    <property type="entry name" value="TRNA (GUANINE-N(1)-)-METHYLTRANSFERASE"/>
    <property type="match status" value="1"/>
</dbReference>
<dbReference type="PANTHER" id="PTHR46417:SF1">
    <property type="entry name" value="TRNA (GUANINE-N(1)-)-METHYLTRANSFERASE"/>
    <property type="match status" value="1"/>
</dbReference>
<dbReference type="Pfam" id="PF01746">
    <property type="entry name" value="tRNA_m1G_MT"/>
    <property type="match status" value="1"/>
</dbReference>
<dbReference type="PIRSF" id="PIRSF000386">
    <property type="entry name" value="tRNA_mtase"/>
    <property type="match status" value="1"/>
</dbReference>
<dbReference type="SUPFAM" id="SSF75217">
    <property type="entry name" value="alpha/beta knot"/>
    <property type="match status" value="1"/>
</dbReference>
<reference key="1">
    <citation type="journal article" date="2007" name="PLoS ONE">
        <title>Paradoxical DNA repair and peroxide resistance gene conservation in Bacillus pumilus SAFR-032.</title>
        <authorList>
            <person name="Gioia J."/>
            <person name="Yerrapragada S."/>
            <person name="Qin X."/>
            <person name="Jiang H."/>
            <person name="Igboeli O.C."/>
            <person name="Muzny D."/>
            <person name="Dugan-Rocha S."/>
            <person name="Ding Y."/>
            <person name="Hawes A."/>
            <person name="Liu W."/>
            <person name="Perez L."/>
            <person name="Kovar C."/>
            <person name="Dinh H."/>
            <person name="Lee S."/>
            <person name="Nazareth L."/>
            <person name="Blyth P."/>
            <person name="Holder M."/>
            <person name="Buhay C."/>
            <person name="Tirumalai M.R."/>
            <person name="Liu Y."/>
            <person name="Dasgupta I."/>
            <person name="Bokhetache L."/>
            <person name="Fujita M."/>
            <person name="Karouia F."/>
            <person name="Eswara Moorthy P."/>
            <person name="Siefert J."/>
            <person name="Uzman A."/>
            <person name="Buzumbo P."/>
            <person name="Verma A."/>
            <person name="Zwiya H."/>
            <person name="McWilliams B.D."/>
            <person name="Olowu A."/>
            <person name="Clinkenbeard K.D."/>
            <person name="Newcombe D."/>
            <person name="Golebiewski L."/>
            <person name="Petrosino J.F."/>
            <person name="Nicholson W.L."/>
            <person name="Fox G.E."/>
            <person name="Venkateswaran K."/>
            <person name="Highlander S.K."/>
            <person name="Weinstock G.M."/>
        </authorList>
    </citation>
    <scope>NUCLEOTIDE SEQUENCE [LARGE SCALE GENOMIC DNA]</scope>
    <source>
        <strain>SAFR-032</strain>
    </source>
</reference>
<protein>
    <recommendedName>
        <fullName evidence="1">tRNA (guanine-N(1)-)-methyltransferase</fullName>
        <ecNumber evidence="1">2.1.1.228</ecNumber>
    </recommendedName>
    <alternativeName>
        <fullName evidence="1">M1G-methyltransferase</fullName>
    </alternativeName>
    <alternativeName>
        <fullName evidence="1">tRNA [GM37] methyltransferase</fullName>
    </alternativeName>
</protein>
<sequence>MKIDFLTLFPEMFEGVLHSSILKKAQEKEAVSFNVVNFREYSDHKHKTVDDYPYGGGAGMVLKAQPVFDAVEDLTNKASKKPRIILVCPQGERYTQKKAEELAKEEHLMFICGHYEGYDERIREHLVTDEISIGDFVLTGGELPAMMIADSVVRLLPHVLGKEASHIEDSFSTGLLEHPHYTRPADYKGLKVPDVLLSGNHAKIEEWRRKESLKRTYTRRPDLIDSCKTLTEEEKRWLWQLHND</sequence>
<evidence type="ECO:0000255" key="1">
    <source>
        <dbReference type="HAMAP-Rule" id="MF_00605"/>
    </source>
</evidence>
<gene>
    <name evidence="1" type="primary">trmD</name>
    <name type="ordered locus">BPUM_1501</name>
</gene>
<keyword id="KW-0963">Cytoplasm</keyword>
<keyword id="KW-0489">Methyltransferase</keyword>
<keyword id="KW-0949">S-adenosyl-L-methionine</keyword>
<keyword id="KW-0808">Transferase</keyword>
<keyword id="KW-0819">tRNA processing</keyword>
<proteinExistence type="inferred from homology"/>
<name>TRMD_BACP2</name>
<feature type="chain" id="PRO_1000061268" description="tRNA (guanine-N(1)-)-methyltransferase">
    <location>
        <begin position="1"/>
        <end position="244"/>
    </location>
</feature>
<feature type="binding site" evidence="1">
    <location>
        <position position="113"/>
    </location>
    <ligand>
        <name>S-adenosyl-L-methionine</name>
        <dbReference type="ChEBI" id="CHEBI:59789"/>
    </ligand>
</feature>
<feature type="binding site" evidence="1">
    <location>
        <begin position="133"/>
        <end position="138"/>
    </location>
    <ligand>
        <name>S-adenosyl-L-methionine</name>
        <dbReference type="ChEBI" id="CHEBI:59789"/>
    </ligand>
</feature>
<accession>A8FD67</accession>
<comment type="function">
    <text evidence="1">Specifically methylates guanosine-37 in various tRNAs.</text>
</comment>
<comment type="catalytic activity">
    <reaction evidence="1">
        <text>guanosine(37) in tRNA + S-adenosyl-L-methionine = N(1)-methylguanosine(37) in tRNA + S-adenosyl-L-homocysteine + H(+)</text>
        <dbReference type="Rhea" id="RHEA:36899"/>
        <dbReference type="Rhea" id="RHEA-COMP:10145"/>
        <dbReference type="Rhea" id="RHEA-COMP:10147"/>
        <dbReference type="ChEBI" id="CHEBI:15378"/>
        <dbReference type="ChEBI" id="CHEBI:57856"/>
        <dbReference type="ChEBI" id="CHEBI:59789"/>
        <dbReference type="ChEBI" id="CHEBI:73542"/>
        <dbReference type="ChEBI" id="CHEBI:74269"/>
        <dbReference type="EC" id="2.1.1.228"/>
    </reaction>
</comment>
<comment type="subunit">
    <text evidence="1">Homodimer.</text>
</comment>
<comment type="subcellular location">
    <subcellularLocation>
        <location evidence="1">Cytoplasm</location>
    </subcellularLocation>
</comment>
<comment type="similarity">
    <text evidence="1">Belongs to the RNA methyltransferase TrmD family.</text>
</comment>
<organism>
    <name type="scientific">Bacillus pumilus (strain SAFR-032)</name>
    <dbReference type="NCBI Taxonomy" id="315750"/>
    <lineage>
        <taxon>Bacteria</taxon>
        <taxon>Bacillati</taxon>
        <taxon>Bacillota</taxon>
        <taxon>Bacilli</taxon>
        <taxon>Bacillales</taxon>
        <taxon>Bacillaceae</taxon>
        <taxon>Bacillus</taxon>
    </lineage>
</organism>